<dbReference type="EC" id="3.6.4.13" evidence="1"/>
<dbReference type="EMBL" id="GG704916">
    <property type="protein sequence ID" value="EAS32504.1"/>
    <property type="molecule type" value="Genomic_DNA"/>
</dbReference>
<dbReference type="RefSeq" id="XP_001244087.1">
    <property type="nucleotide sequence ID" value="XM_001244086.2"/>
</dbReference>
<dbReference type="SMR" id="Q1E1N5"/>
<dbReference type="FunCoup" id="Q1E1N5">
    <property type="interactions" value="1093"/>
</dbReference>
<dbReference type="STRING" id="246410.Q1E1N5"/>
<dbReference type="GeneID" id="4565045"/>
<dbReference type="KEGG" id="cim:CIMG_03528"/>
<dbReference type="VEuPathDB" id="FungiDB:CIMG_03528"/>
<dbReference type="InParanoid" id="Q1E1N5"/>
<dbReference type="OMA" id="GIGIKCC"/>
<dbReference type="OrthoDB" id="10261904at2759"/>
<dbReference type="Proteomes" id="UP000001261">
    <property type="component" value="Unassembled WGS sequence"/>
</dbReference>
<dbReference type="GO" id="GO:0005829">
    <property type="term" value="C:cytosol"/>
    <property type="evidence" value="ECO:0007669"/>
    <property type="project" value="TreeGrafter"/>
</dbReference>
<dbReference type="GO" id="GO:0005634">
    <property type="term" value="C:nucleus"/>
    <property type="evidence" value="ECO:0007669"/>
    <property type="project" value="UniProtKB-SubCell"/>
</dbReference>
<dbReference type="GO" id="GO:0005524">
    <property type="term" value="F:ATP binding"/>
    <property type="evidence" value="ECO:0007669"/>
    <property type="project" value="UniProtKB-KW"/>
</dbReference>
<dbReference type="GO" id="GO:0016887">
    <property type="term" value="F:ATP hydrolysis activity"/>
    <property type="evidence" value="ECO:0007669"/>
    <property type="project" value="RHEA"/>
</dbReference>
<dbReference type="GO" id="GO:0003723">
    <property type="term" value="F:RNA binding"/>
    <property type="evidence" value="ECO:0007669"/>
    <property type="project" value="UniProtKB-KW"/>
</dbReference>
<dbReference type="GO" id="GO:0003724">
    <property type="term" value="F:RNA helicase activity"/>
    <property type="evidence" value="ECO:0007669"/>
    <property type="project" value="UniProtKB-EC"/>
</dbReference>
<dbReference type="GO" id="GO:0006364">
    <property type="term" value="P:rRNA processing"/>
    <property type="evidence" value="ECO:0007669"/>
    <property type="project" value="UniProtKB-KW"/>
</dbReference>
<dbReference type="CDD" id="cd17954">
    <property type="entry name" value="DEADc_DDX47"/>
    <property type="match status" value="1"/>
</dbReference>
<dbReference type="CDD" id="cd18787">
    <property type="entry name" value="SF2_C_DEAD"/>
    <property type="match status" value="1"/>
</dbReference>
<dbReference type="FunFam" id="3.40.50.300:FF:000681">
    <property type="entry name" value="probable ATP-dependent RNA helicase DDX47"/>
    <property type="match status" value="1"/>
</dbReference>
<dbReference type="Gene3D" id="3.40.50.300">
    <property type="entry name" value="P-loop containing nucleotide triphosphate hydrolases"/>
    <property type="match status" value="2"/>
</dbReference>
<dbReference type="InterPro" id="IPR044765">
    <property type="entry name" value="DDX47/Rrp3_DEADc"/>
</dbReference>
<dbReference type="InterPro" id="IPR011545">
    <property type="entry name" value="DEAD/DEAH_box_helicase_dom"/>
</dbReference>
<dbReference type="InterPro" id="IPR050079">
    <property type="entry name" value="DEAD_box_RNA_helicase"/>
</dbReference>
<dbReference type="InterPro" id="IPR014001">
    <property type="entry name" value="Helicase_ATP-bd"/>
</dbReference>
<dbReference type="InterPro" id="IPR001650">
    <property type="entry name" value="Helicase_C-like"/>
</dbReference>
<dbReference type="InterPro" id="IPR027417">
    <property type="entry name" value="P-loop_NTPase"/>
</dbReference>
<dbReference type="InterPro" id="IPR000629">
    <property type="entry name" value="RNA-helicase_DEAD-box_CS"/>
</dbReference>
<dbReference type="InterPro" id="IPR014014">
    <property type="entry name" value="RNA_helicase_DEAD_Q_motif"/>
</dbReference>
<dbReference type="PANTHER" id="PTHR47959:SF24">
    <property type="entry name" value="ATP-DEPENDENT RNA HELICASE"/>
    <property type="match status" value="1"/>
</dbReference>
<dbReference type="PANTHER" id="PTHR47959">
    <property type="entry name" value="ATP-DEPENDENT RNA HELICASE RHLE-RELATED"/>
    <property type="match status" value="1"/>
</dbReference>
<dbReference type="Pfam" id="PF00270">
    <property type="entry name" value="DEAD"/>
    <property type="match status" value="1"/>
</dbReference>
<dbReference type="Pfam" id="PF00271">
    <property type="entry name" value="Helicase_C"/>
    <property type="match status" value="1"/>
</dbReference>
<dbReference type="SMART" id="SM00487">
    <property type="entry name" value="DEXDc"/>
    <property type="match status" value="1"/>
</dbReference>
<dbReference type="SMART" id="SM00490">
    <property type="entry name" value="HELICc"/>
    <property type="match status" value="1"/>
</dbReference>
<dbReference type="SUPFAM" id="SSF52540">
    <property type="entry name" value="P-loop containing nucleoside triphosphate hydrolases"/>
    <property type="match status" value="1"/>
</dbReference>
<dbReference type="PROSITE" id="PS00039">
    <property type="entry name" value="DEAD_ATP_HELICASE"/>
    <property type="match status" value="1"/>
</dbReference>
<dbReference type="PROSITE" id="PS51192">
    <property type="entry name" value="HELICASE_ATP_BIND_1"/>
    <property type="match status" value="1"/>
</dbReference>
<dbReference type="PROSITE" id="PS51194">
    <property type="entry name" value="HELICASE_CTER"/>
    <property type="match status" value="1"/>
</dbReference>
<dbReference type="PROSITE" id="PS51195">
    <property type="entry name" value="Q_MOTIF"/>
    <property type="match status" value="1"/>
</dbReference>
<organism>
    <name type="scientific">Coccidioides immitis (strain RS)</name>
    <name type="common">Valley fever fungus</name>
    <dbReference type="NCBI Taxonomy" id="246410"/>
    <lineage>
        <taxon>Eukaryota</taxon>
        <taxon>Fungi</taxon>
        <taxon>Dikarya</taxon>
        <taxon>Ascomycota</taxon>
        <taxon>Pezizomycotina</taxon>
        <taxon>Eurotiomycetes</taxon>
        <taxon>Eurotiomycetidae</taxon>
        <taxon>Onygenales</taxon>
        <taxon>Onygenaceae</taxon>
        <taxon>Coccidioides</taxon>
    </lineage>
</organism>
<protein>
    <recommendedName>
        <fullName evidence="5">ATP-dependent rRNA helicase RRP3</fullName>
        <ecNumber evidence="1">3.6.4.13</ecNumber>
    </recommendedName>
</protein>
<accession>Q1E1N5</accession>
<accession>J3KBW0</accession>
<proteinExistence type="inferred from homology"/>
<feature type="chain" id="PRO_0000256038" description="ATP-dependent rRNA helicase RRP3">
    <location>
        <begin position="1"/>
        <end position="474"/>
    </location>
</feature>
<feature type="domain" description="Helicase ATP-binding" evidence="2">
    <location>
        <begin position="79"/>
        <end position="250"/>
    </location>
</feature>
<feature type="domain" description="Helicase C-terminal" evidence="3">
    <location>
        <begin position="278"/>
        <end position="422"/>
    </location>
</feature>
<feature type="region of interest" description="Disordered" evidence="4">
    <location>
        <begin position="1"/>
        <end position="43"/>
    </location>
</feature>
<feature type="region of interest" description="Disordered" evidence="4">
    <location>
        <begin position="442"/>
        <end position="474"/>
    </location>
</feature>
<feature type="short sequence motif" description="Q motif" evidence="5">
    <location>
        <begin position="48"/>
        <end position="76"/>
    </location>
</feature>
<feature type="short sequence motif" description="DEAD box" evidence="5">
    <location>
        <begin position="198"/>
        <end position="201"/>
    </location>
</feature>
<feature type="compositionally biased region" description="Basic residues" evidence="4">
    <location>
        <begin position="1"/>
        <end position="10"/>
    </location>
</feature>
<feature type="compositionally biased region" description="Polar residues" evidence="4">
    <location>
        <begin position="24"/>
        <end position="36"/>
    </location>
</feature>
<feature type="compositionally biased region" description="Basic residues" evidence="4">
    <location>
        <begin position="448"/>
        <end position="463"/>
    </location>
</feature>
<feature type="compositionally biased region" description="Basic and acidic residues" evidence="4">
    <location>
        <begin position="464"/>
        <end position="474"/>
    </location>
</feature>
<feature type="binding site" evidence="2">
    <location>
        <begin position="92"/>
        <end position="99"/>
    </location>
    <ligand>
        <name>ATP</name>
        <dbReference type="ChEBI" id="CHEBI:30616"/>
    </ligand>
</feature>
<gene>
    <name evidence="1" type="primary">RRP3</name>
    <name type="ORF">CIMG_03528</name>
</gene>
<name>RRP3_COCIM</name>
<reference key="1">
    <citation type="journal article" date="2009" name="Genome Res.">
        <title>Comparative genomic analyses of the human fungal pathogens Coccidioides and their relatives.</title>
        <authorList>
            <person name="Sharpton T.J."/>
            <person name="Stajich J.E."/>
            <person name="Rounsley S.D."/>
            <person name="Gardner M.J."/>
            <person name="Wortman J.R."/>
            <person name="Jordar V.S."/>
            <person name="Maiti R."/>
            <person name="Kodira C.D."/>
            <person name="Neafsey D.E."/>
            <person name="Zeng Q."/>
            <person name="Hung C.-Y."/>
            <person name="McMahan C."/>
            <person name="Muszewska A."/>
            <person name="Grynberg M."/>
            <person name="Mandel M.A."/>
            <person name="Kellner E.M."/>
            <person name="Barker B.M."/>
            <person name="Galgiani J.N."/>
            <person name="Orbach M.J."/>
            <person name="Kirkland T.N."/>
            <person name="Cole G.T."/>
            <person name="Henn M.R."/>
            <person name="Birren B.W."/>
            <person name="Taylor J.W."/>
        </authorList>
    </citation>
    <scope>NUCLEOTIDE SEQUENCE [LARGE SCALE GENOMIC DNA]</scope>
    <source>
        <strain>RS</strain>
    </source>
</reference>
<reference key="2">
    <citation type="journal article" date="2010" name="Genome Res.">
        <title>Population genomic sequencing of Coccidioides fungi reveals recent hybridization and transposon control.</title>
        <authorList>
            <person name="Neafsey D.E."/>
            <person name="Barker B.M."/>
            <person name="Sharpton T.J."/>
            <person name="Stajich J.E."/>
            <person name="Park D.J."/>
            <person name="Whiston E."/>
            <person name="Hung C.-Y."/>
            <person name="McMahan C."/>
            <person name="White J."/>
            <person name="Sykes S."/>
            <person name="Heiman D."/>
            <person name="Young S."/>
            <person name="Zeng Q."/>
            <person name="Abouelleil A."/>
            <person name="Aftuck L."/>
            <person name="Bessette D."/>
            <person name="Brown A."/>
            <person name="FitzGerald M."/>
            <person name="Lui A."/>
            <person name="Macdonald J.P."/>
            <person name="Priest M."/>
            <person name="Orbach M.J."/>
            <person name="Galgiani J.N."/>
            <person name="Kirkland T.N."/>
            <person name="Cole G.T."/>
            <person name="Birren B.W."/>
            <person name="Henn M.R."/>
            <person name="Taylor J.W."/>
            <person name="Rounsley S.D."/>
        </authorList>
    </citation>
    <scope>GENOME REANNOTATION</scope>
    <source>
        <strain>RS</strain>
    </source>
</reference>
<keyword id="KW-0067">ATP-binding</keyword>
<keyword id="KW-0347">Helicase</keyword>
<keyword id="KW-0378">Hydrolase</keyword>
<keyword id="KW-0547">Nucleotide-binding</keyword>
<keyword id="KW-0539">Nucleus</keyword>
<keyword id="KW-1185">Reference proteome</keyword>
<keyword id="KW-0690">Ribosome biogenesis</keyword>
<keyword id="KW-0694">RNA-binding</keyword>
<keyword id="KW-0698">rRNA processing</keyword>
<sequence>MPSMKRRKLSHTPPQGEAEDGFSDSETSQASLQETPGNDEKIEATTTKSFKDLGIIDSLCEACDSLGYKAPTQIQAESIPLALQGRDLIGLAETGSGKTAAFALPILQALMDKPQSMFGLVLAPTRELAYQISQQFEALGSLISVRCAVIVGGMDMVSQAIALGKKPHIIVATPGRLLDHLENTKGFSLRSLKYLVMDEADRLLDLDFGPILDKILKVLPKERRTYLFSATMSSKVESLQRASLSNPLRVSVSSNKYQTVSTLLQNCLIIPHKHKDIYLIYLLNEFPGQSVIIFTRTVNETQRLAILLRALGFGAIPLHGQLSQSARLGALGKFRSRSRNILVATDVAARGLDIPSVDLVLNYDLPSDSKTYIHRVGRTARAGKSGRAFSLVTQYDVEIWQRIEAALGKELDEYKVEKEEVMVLSDRVGEAQRHAITEMKELHENRGKKGATLRNRRIGKGAKRSRDEMDREEG</sequence>
<comment type="function">
    <text evidence="1">ATP-dependent rRNA helicase required for pre-ribosomal RNA processing. Involved in the maturation of the 35S-pre-rRNA and to its cleavage to mature 18S rRNA.</text>
</comment>
<comment type="catalytic activity">
    <reaction evidence="1">
        <text>ATP + H2O = ADP + phosphate + H(+)</text>
        <dbReference type="Rhea" id="RHEA:13065"/>
        <dbReference type="ChEBI" id="CHEBI:15377"/>
        <dbReference type="ChEBI" id="CHEBI:15378"/>
        <dbReference type="ChEBI" id="CHEBI:30616"/>
        <dbReference type="ChEBI" id="CHEBI:43474"/>
        <dbReference type="ChEBI" id="CHEBI:456216"/>
        <dbReference type="EC" id="3.6.4.13"/>
    </reaction>
</comment>
<comment type="subunit">
    <text evidence="1">Interacts with the SSU processome.</text>
</comment>
<comment type="subcellular location">
    <subcellularLocation>
        <location evidence="5">Nucleus</location>
    </subcellularLocation>
</comment>
<comment type="domain">
    <text evidence="5">The Q motif is unique to and characteristic of the DEAD box family of RNA helicases and controls ATP binding and hydrolysis.</text>
</comment>
<comment type="similarity">
    <text evidence="5">Belongs to the DEAD box helicase family. DDX47/RRP3 subfamily.</text>
</comment>
<evidence type="ECO:0000250" key="1">
    <source>
        <dbReference type="UniProtKB" id="P38712"/>
    </source>
</evidence>
<evidence type="ECO:0000255" key="2">
    <source>
        <dbReference type="PROSITE-ProRule" id="PRU00541"/>
    </source>
</evidence>
<evidence type="ECO:0000255" key="3">
    <source>
        <dbReference type="PROSITE-ProRule" id="PRU00542"/>
    </source>
</evidence>
<evidence type="ECO:0000256" key="4">
    <source>
        <dbReference type="SAM" id="MobiDB-lite"/>
    </source>
</evidence>
<evidence type="ECO:0000305" key="5"/>